<feature type="chain" id="PRO_0000303247" description="tRNA N6-adenosine threonylcarbamoyltransferase">
    <location>
        <begin position="1"/>
        <end position="337"/>
    </location>
</feature>
<feature type="binding site" evidence="1">
    <location>
        <position position="111"/>
    </location>
    <ligand>
        <name>Fe cation</name>
        <dbReference type="ChEBI" id="CHEBI:24875"/>
    </ligand>
</feature>
<feature type="binding site" evidence="1">
    <location>
        <position position="115"/>
    </location>
    <ligand>
        <name>Fe cation</name>
        <dbReference type="ChEBI" id="CHEBI:24875"/>
    </ligand>
</feature>
<feature type="binding site" evidence="1">
    <location>
        <begin position="134"/>
        <end position="138"/>
    </location>
    <ligand>
        <name>substrate</name>
    </ligand>
</feature>
<feature type="binding site" evidence="1">
    <location>
        <position position="167"/>
    </location>
    <ligand>
        <name>substrate</name>
    </ligand>
</feature>
<feature type="binding site" evidence="1">
    <location>
        <position position="180"/>
    </location>
    <ligand>
        <name>substrate</name>
    </ligand>
</feature>
<feature type="binding site" evidence="1">
    <location>
        <position position="272"/>
    </location>
    <ligand>
        <name>substrate</name>
    </ligand>
</feature>
<feature type="binding site" evidence="1">
    <location>
        <position position="300"/>
    </location>
    <ligand>
        <name>Fe cation</name>
        <dbReference type="ChEBI" id="CHEBI:24875"/>
    </ligand>
</feature>
<dbReference type="EC" id="2.3.1.234" evidence="1"/>
<dbReference type="EMBL" id="CP000462">
    <property type="protein sequence ID" value="ABK39627.1"/>
    <property type="molecule type" value="Genomic_DNA"/>
</dbReference>
<dbReference type="RefSeq" id="WP_011704779.1">
    <property type="nucleotide sequence ID" value="NC_008570.1"/>
</dbReference>
<dbReference type="RefSeq" id="YP_855374.1">
    <property type="nucleotide sequence ID" value="NC_008570.1"/>
</dbReference>
<dbReference type="SMR" id="A0KGI3"/>
<dbReference type="STRING" id="380703.AHA_0831"/>
<dbReference type="EnsemblBacteria" id="ABK39627">
    <property type="protein sequence ID" value="ABK39627"/>
    <property type="gene ID" value="AHA_0831"/>
</dbReference>
<dbReference type="GeneID" id="4487118"/>
<dbReference type="KEGG" id="aha:AHA_0831"/>
<dbReference type="PATRIC" id="fig|380703.7.peg.831"/>
<dbReference type="eggNOG" id="COG0533">
    <property type="taxonomic scope" value="Bacteria"/>
</dbReference>
<dbReference type="HOGENOM" id="CLU_023208_0_0_6"/>
<dbReference type="OrthoDB" id="9806197at2"/>
<dbReference type="Proteomes" id="UP000000756">
    <property type="component" value="Chromosome"/>
</dbReference>
<dbReference type="GO" id="GO:0005737">
    <property type="term" value="C:cytoplasm"/>
    <property type="evidence" value="ECO:0007669"/>
    <property type="project" value="UniProtKB-SubCell"/>
</dbReference>
<dbReference type="GO" id="GO:0005506">
    <property type="term" value="F:iron ion binding"/>
    <property type="evidence" value="ECO:0007669"/>
    <property type="project" value="UniProtKB-UniRule"/>
</dbReference>
<dbReference type="GO" id="GO:0061711">
    <property type="term" value="F:N(6)-L-threonylcarbamoyladenine synthase activity"/>
    <property type="evidence" value="ECO:0007669"/>
    <property type="project" value="UniProtKB-EC"/>
</dbReference>
<dbReference type="GO" id="GO:0002949">
    <property type="term" value="P:tRNA threonylcarbamoyladenosine modification"/>
    <property type="evidence" value="ECO:0007669"/>
    <property type="project" value="UniProtKB-UniRule"/>
</dbReference>
<dbReference type="CDD" id="cd24133">
    <property type="entry name" value="ASKHA_NBD_TsaD_bac"/>
    <property type="match status" value="1"/>
</dbReference>
<dbReference type="FunFam" id="3.30.420.40:FF:000031">
    <property type="entry name" value="tRNA N6-adenosine threonylcarbamoyltransferase"/>
    <property type="match status" value="1"/>
</dbReference>
<dbReference type="Gene3D" id="3.30.420.40">
    <property type="match status" value="2"/>
</dbReference>
<dbReference type="HAMAP" id="MF_01445">
    <property type="entry name" value="TsaD"/>
    <property type="match status" value="1"/>
</dbReference>
<dbReference type="InterPro" id="IPR043129">
    <property type="entry name" value="ATPase_NBD"/>
</dbReference>
<dbReference type="InterPro" id="IPR000905">
    <property type="entry name" value="Gcp-like_dom"/>
</dbReference>
<dbReference type="InterPro" id="IPR017861">
    <property type="entry name" value="KAE1/TsaD"/>
</dbReference>
<dbReference type="InterPro" id="IPR017860">
    <property type="entry name" value="Peptidase_M22_CS"/>
</dbReference>
<dbReference type="InterPro" id="IPR022450">
    <property type="entry name" value="TsaD"/>
</dbReference>
<dbReference type="NCBIfam" id="TIGR00329">
    <property type="entry name" value="gcp_kae1"/>
    <property type="match status" value="1"/>
</dbReference>
<dbReference type="NCBIfam" id="TIGR03723">
    <property type="entry name" value="T6A_TsaD_YgjD"/>
    <property type="match status" value="1"/>
</dbReference>
<dbReference type="PANTHER" id="PTHR11735">
    <property type="entry name" value="TRNA N6-ADENOSINE THREONYLCARBAMOYLTRANSFERASE"/>
    <property type="match status" value="1"/>
</dbReference>
<dbReference type="PANTHER" id="PTHR11735:SF6">
    <property type="entry name" value="TRNA N6-ADENOSINE THREONYLCARBAMOYLTRANSFERASE, MITOCHONDRIAL"/>
    <property type="match status" value="1"/>
</dbReference>
<dbReference type="Pfam" id="PF00814">
    <property type="entry name" value="TsaD"/>
    <property type="match status" value="1"/>
</dbReference>
<dbReference type="PRINTS" id="PR00789">
    <property type="entry name" value="OSIALOPTASE"/>
</dbReference>
<dbReference type="SUPFAM" id="SSF53067">
    <property type="entry name" value="Actin-like ATPase domain"/>
    <property type="match status" value="2"/>
</dbReference>
<dbReference type="PROSITE" id="PS01016">
    <property type="entry name" value="GLYCOPROTEASE"/>
    <property type="match status" value="1"/>
</dbReference>
<keyword id="KW-0012">Acyltransferase</keyword>
<keyword id="KW-0963">Cytoplasm</keyword>
<keyword id="KW-0408">Iron</keyword>
<keyword id="KW-0479">Metal-binding</keyword>
<keyword id="KW-1185">Reference proteome</keyword>
<keyword id="KW-0808">Transferase</keyword>
<keyword id="KW-0819">tRNA processing</keyword>
<reference key="1">
    <citation type="journal article" date="2006" name="J. Bacteriol.">
        <title>Genome sequence of Aeromonas hydrophila ATCC 7966T: jack of all trades.</title>
        <authorList>
            <person name="Seshadri R."/>
            <person name="Joseph S.W."/>
            <person name="Chopra A.K."/>
            <person name="Sha J."/>
            <person name="Shaw J."/>
            <person name="Graf J."/>
            <person name="Haft D.H."/>
            <person name="Wu M."/>
            <person name="Ren Q."/>
            <person name="Rosovitz M.J."/>
            <person name="Madupu R."/>
            <person name="Tallon L."/>
            <person name="Kim M."/>
            <person name="Jin S."/>
            <person name="Vuong H."/>
            <person name="Stine O.C."/>
            <person name="Ali A."/>
            <person name="Horneman A.J."/>
            <person name="Heidelberg J.F."/>
        </authorList>
    </citation>
    <scope>NUCLEOTIDE SEQUENCE [LARGE SCALE GENOMIC DNA]</scope>
    <source>
        <strain>ATCC 7966 / DSM 30187 / BCRC 13018 / CCUG 14551 / JCM 1027 / KCTC 2358 / NCIMB 9240 / NCTC 8049</strain>
    </source>
</reference>
<organism>
    <name type="scientific">Aeromonas hydrophila subsp. hydrophila (strain ATCC 7966 / DSM 30187 / BCRC 13018 / CCUG 14551 / JCM 1027 / KCTC 2358 / NCIMB 9240 / NCTC 8049)</name>
    <dbReference type="NCBI Taxonomy" id="380703"/>
    <lineage>
        <taxon>Bacteria</taxon>
        <taxon>Pseudomonadati</taxon>
        <taxon>Pseudomonadota</taxon>
        <taxon>Gammaproteobacteria</taxon>
        <taxon>Aeromonadales</taxon>
        <taxon>Aeromonadaceae</taxon>
        <taxon>Aeromonas</taxon>
    </lineage>
</organism>
<accession>A0KGI3</accession>
<evidence type="ECO:0000255" key="1">
    <source>
        <dbReference type="HAMAP-Rule" id="MF_01445"/>
    </source>
</evidence>
<comment type="function">
    <text evidence="1">Required for the formation of a threonylcarbamoyl group on adenosine at position 37 (t(6)A37) in tRNAs that read codons beginning with adenine. Is involved in the transfer of the threonylcarbamoyl moiety of threonylcarbamoyl-AMP (TC-AMP) to the N6 group of A37, together with TsaE and TsaB. TsaD likely plays a direct catalytic role in this reaction.</text>
</comment>
<comment type="catalytic activity">
    <reaction evidence="1">
        <text>L-threonylcarbamoyladenylate + adenosine(37) in tRNA = N(6)-L-threonylcarbamoyladenosine(37) in tRNA + AMP + H(+)</text>
        <dbReference type="Rhea" id="RHEA:37059"/>
        <dbReference type="Rhea" id="RHEA-COMP:10162"/>
        <dbReference type="Rhea" id="RHEA-COMP:10163"/>
        <dbReference type="ChEBI" id="CHEBI:15378"/>
        <dbReference type="ChEBI" id="CHEBI:73682"/>
        <dbReference type="ChEBI" id="CHEBI:74411"/>
        <dbReference type="ChEBI" id="CHEBI:74418"/>
        <dbReference type="ChEBI" id="CHEBI:456215"/>
        <dbReference type="EC" id="2.3.1.234"/>
    </reaction>
</comment>
<comment type="cofactor">
    <cofactor evidence="1">
        <name>Fe(2+)</name>
        <dbReference type="ChEBI" id="CHEBI:29033"/>
    </cofactor>
    <text evidence="1">Binds 1 Fe(2+) ion per subunit.</text>
</comment>
<comment type="subcellular location">
    <subcellularLocation>
        <location evidence="1">Cytoplasm</location>
    </subcellularLocation>
</comment>
<comment type="similarity">
    <text evidence="1">Belongs to the KAE1 / TsaD family.</text>
</comment>
<name>TSAD_AERHH</name>
<proteinExistence type="inferred from homology"/>
<protein>
    <recommendedName>
        <fullName evidence="1">tRNA N6-adenosine threonylcarbamoyltransferase</fullName>
        <ecNumber evidence="1">2.3.1.234</ecNumber>
    </recommendedName>
    <alternativeName>
        <fullName evidence="1">N6-L-threonylcarbamoyladenine synthase</fullName>
        <shortName evidence="1">t(6)A synthase</shortName>
    </alternativeName>
    <alternativeName>
        <fullName evidence="1">t(6)A37 threonylcarbamoyladenosine biosynthesis protein TsaD</fullName>
    </alternativeName>
    <alternativeName>
        <fullName evidence="1">tRNA threonylcarbamoyladenosine biosynthesis protein TsaD</fullName>
    </alternativeName>
</protein>
<sequence length="337" mass="36140">MRVLGIETSCDETGIAIFDDQKGILSHQLYSQVKLHADYGGVVPELASRDHVRKTIPLIQAALREAGLGKDDIDGIAYTAGPGLVGAILVGATIGRSLAMAWNKPAIAVHHMEGHLLAPMLEERAPEFPFVALLVSGGHSMLVRVDGIGSYQLLGESIDDAAGEAFDKTAKLMGLDYPGGPLLSRLAEKGTTGRFTFPRPMTDRPGLDMSFSGLKTFAANTIAANGDDEQTRADIARAFEDAVVDTLAIKCRRALKETGLNRLVVAGGVSANRHLRAQLAELMESLKGEVFYPRTEYCTDNGAMIAYAGMQRLKAGVFEPLAVKAVPRWPLDTLDPI</sequence>
<gene>
    <name evidence="1" type="primary">tsaD</name>
    <name type="synonym">gcp</name>
    <name type="ordered locus">AHA_0831</name>
</gene>